<protein>
    <recommendedName>
        <fullName evidence="1">tRNA N6-adenosine threonylcarbamoyltransferase</fullName>
        <ecNumber evidence="1">2.3.1.234</ecNumber>
    </recommendedName>
    <alternativeName>
        <fullName evidence="1">N6-L-threonylcarbamoyladenine synthase</fullName>
        <shortName evidence="1">t(6)A synthase</shortName>
    </alternativeName>
    <alternativeName>
        <fullName evidence="1">t(6)A37 threonylcarbamoyladenosine biosynthesis protein TsaD</fullName>
    </alternativeName>
    <alternativeName>
        <fullName evidence="1">tRNA threonylcarbamoyladenosine biosynthesis protein TsaD</fullName>
    </alternativeName>
</protein>
<dbReference type="EC" id="2.3.1.234" evidence="1"/>
<dbReference type="EMBL" id="AM233362">
    <property type="protein sequence ID" value="CAJ80180.1"/>
    <property type="molecule type" value="Genomic_DNA"/>
</dbReference>
<dbReference type="RefSeq" id="WP_003017221.1">
    <property type="nucleotide sequence ID" value="NZ_CP009694.1"/>
</dbReference>
<dbReference type="SMR" id="Q2A1N0"/>
<dbReference type="KEGG" id="ftl:FTL_1741"/>
<dbReference type="Proteomes" id="UP000001944">
    <property type="component" value="Chromosome"/>
</dbReference>
<dbReference type="GO" id="GO:0005737">
    <property type="term" value="C:cytoplasm"/>
    <property type="evidence" value="ECO:0007669"/>
    <property type="project" value="UniProtKB-SubCell"/>
</dbReference>
<dbReference type="GO" id="GO:0005506">
    <property type="term" value="F:iron ion binding"/>
    <property type="evidence" value="ECO:0007669"/>
    <property type="project" value="UniProtKB-UniRule"/>
</dbReference>
<dbReference type="GO" id="GO:0061711">
    <property type="term" value="F:N(6)-L-threonylcarbamoyladenine synthase activity"/>
    <property type="evidence" value="ECO:0007669"/>
    <property type="project" value="UniProtKB-EC"/>
</dbReference>
<dbReference type="GO" id="GO:0002949">
    <property type="term" value="P:tRNA threonylcarbamoyladenosine modification"/>
    <property type="evidence" value="ECO:0007669"/>
    <property type="project" value="UniProtKB-UniRule"/>
</dbReference>
<dbReference type="CDD" id="cd24133">
    <property type="entry name" value="ASKHA_NBD_TsaD_bac"/>
    <property type="match status" value="1"/>
</dbReference>
<dbReference type="FunFam" id="3.30.420.40:FF:000012">
    <property type="entry name" value="tRNA N6-adenosine threonylcarbamoyltransferase"/>
    <property type="match status" value="1"/>
</dbReference>
<dbReference type="FunFam" id="3.30.420.40:FF:000040">
    <property type="entry name" value="tRNA N6-adenosine threonylcarbamoyltransferase"/>
    <property type="match status" value="1"/>
</dbReference>
<dbReference type="Gene3D" id="3.30.420.40">
    <property type="match status" value="2"/>
</dbReference>
<dbReference type="HAMAP" id="MF_01445">
    <property type="entry name" value="TsaD"/>
    <property type="match status" value="1"/>
</dbReference>
<dbReference type="InterPro" id="IPR043129">
    <property type="entry name" value="ATPase_NBD"/>
</dbReference>
<dbReference type="InterPro" id="IPR000905">
    <property type="entry name" value="Gcp-like_dom"/>
</dbReference>
<dbReference type="InterPro" id="IPR017861">
    <property type="entry name" value="KAE1/TsaD"/>
</dbReference>
<dbReference type="InterPro" id="IPR022450">
    <property type="entry name" value="TsaD"/>
</dbReference>
<dbReference type="NCBIfam" id="TIGR00329">
    <property type="entry name" value="gcp_kae1"/>
    <property type="match status" value="1"/>
</dbReference>
<dbReference type="NCBIfam" id="TIGR03723">
    <property type="entry name" value="T6A_TsaD_YgjD"/>
    <property type="match status" value="1"/>
</dbReference>
<dbReference type="PANTHER" id="PTHR11735">
    <property type="entry name" value="TRNA N6-ADENOSINE THREONYLCARBAMOYLTRANSFERASE"/>
    <property type="match status" value="1"/>
</dbReference>
<dbReference type="PANTHER" id="PTHR11735:SF6">
    <property type="entry name" value="TRNA N6-ADENOSINE THREONYLCARBAMOYLTRANSFERASE, MITOCHONDRIAL"/>
    <property type="match status" value="1"/>
</dbReference>
<dbReference type="Pfam" id="PF00814">
    <property type="entry name" value="TsaD"/>
    <property type="match status" value="1"/>
</dbReference>
<dbReference type="PRINTS" id="PR00789">
    <property type="entry name" value="OSIALOPTASE"/>
</dbReference>
<dbReference type="SUPFAM" id="SSF53067">
    <property type="entry name" value="Actin-like ATPase domain"/>
    <property type="match status" value="2"/>
</dbReference>
<keyword id="KW-0012">Acyltransferase</keyword>
<keyword id="KW-0963">Cytoplasm</keyword>
<keyword id="KW-0408">Iron</keyword>
<keyword id="KW-0479">Metal-binding</keyword>
<keyword id="KW-1185">Reference proteome</keyword>
<keyword id="KW-0808">Transferase</keyword>
<keyword id="KW-0819">tRNA processing</keyword>
<name>TSAD_FRATH</name>
<evidence type="ECO:0000255" key="1">
    <source>
        <dbReference type="HAMAP-Rule" id="MF_01445"/>
    </source>
</evidence>
<reference key="1">
    <citation type="submission" date="2006-03" db="EMBL/GenBank/DDBJ databases">
        <title>Complete genome sequence of Francisella tularensis LVS (Live Vaccine Strain).</title>
        <authorList>
            <person name="Chain P."/>
            <person name="Larimer F."/>
            <person name="Land M."/>
            <person name="Stilwagen S."/>
            <person name="Larsson P."/>
            <person name="Bearden S."/>
            <person name="Chu M."/>
            <person name="Oyston P."/>
            <person name="Forsman M."/>
            <person name="Andersson S."/>
            <person name="Lindler L."/>
            <person name="Titball R."/>
            <person name="Garcia E."/>
        </authorList>
    </citation>
    <scope>NUCLEOTIDE SEQUENCE [LARGE SCALE GENOMIC DNA]</scope>
    <source>
        <strain>LVS</strain>
    </source>
</reference>
<proteinExistence type="inferred from homology"/>
<sequence>MIVLGIESSCDETGLAIYDYSKKKLIADELYSQVKLHKKYGGVVPELASREHIAKLNLLAKKIFKETGLSFEDIDCIAYTAMPGLVGALMVGATFAKTLGLIHNIDTIAVHHLEGHLLSPLLDHNSNIEYPFVALLVSGGHTQLFEVKEFGEYSLLGESIDDAAGEAFDKTTKLLGMGYPGGVEVANLADQATDKSKYILPRPMKNKPNLDFSFSGLKTAVLNTWYDEQDQSLENKANLCYAFQNAAIDVLVSKCAKALQKTKNTRLVISGGVSANKLLRHQLDLLAKNREYQIFFPPMKYCTDNGAMIALAGAYRYVNGFKDSNLEINVKARSPL</sequence>
<feature type="chain" id="PRO_0000303363" description="tRNA N6-adenosine threonylcarbamoyltransferase">
    <location>
        <begin position="1"/>
        <end position="336"/>
    </location>
</feature>
<feature type="binding site" evidence="1">
    <location>
        <position position="112"/>
    </location>
    <ligand>
        <name>Fe cation</name>
        <dbReference type="ChEBI" id="CHEBI:24875"/>
    </ligand>
</feature>
<feature type="binding site" evidence="1">
    <location>
        <position position="116"/>
    </location>
    <ligand>
        <name>Fe cation</name>
        <dbReference type="ChEBI" id="CHEBI:24875"/>
    </ligand>
</feature>
<feature type="binding site" evidence="1">
    <location>
        <begin position="136"/>
        <end position="140"/>
    </location>
    <ligand>
        <name>substrate</name>
    </ligand>
</feature>
<feature type="binding site" evidence="1">
    <location>
        <position position="169"/>
    </location>
    <ligand>
        <name>substrate</name>
    </ligand>
</feature>
<feature type="binding site" evidence="1">
    <location>
        <position position="182"/>
    </location>
    <ligand>
        <name>substrate</name>
    </ligand>
</feature>
<feature type="binding site" evidence="1">
    <location>
        <position position="276"/>
    </location>
    <ligand>
        <name>substrate</name>
    </ligand>
</feature>
<feature type="binding site" evidence="1">
    <location>
        <position position="304"/>
    </location>
    <ligand>
        <name>Fe cation</name>
        <dbReference type="ChEBI" id="CHEBI:24875"/>
    </ligand>
</feature>
<accession>Q2A1N0</accession>
<comment type="function">
    <text evidence="1">Required for the formation of a threonylcarbamoyl group on adenosine at position 37 (t(6)A37) in tRNAs that read codons beginning with adenine. Is involved in the transfer of the threonylcarbamoyl moiety of threonylcarbamoyl-AMP (TC-AMP) to the N6 group of A37, together with TsaE and TsaB. TsaD likely plays a direct catalytic role in this reaction.</text>
</comment>
<comment type="catalytic activity">
    <reaction evidence="1">
        <text>L-threonylcarbamoyladenylate + adenosine(37) in tRNA = N(6)-L-threonylcarbamoyladenosine(37) in tRNA + AMP + H(+)</text>
        <dbReference type="Rhea" id="RHEA:37059"/>
        <dbReference type="Rhea" id="RHEA-COMP:10162"/>
        <dbReference type="Rhea" id="RHEA-COMP:10163"/>
        <dbReference type="ChEBI" id="CHEBI:15378"/>
        <dbReference type="ChEBI" id="CHEBI:73682"/>
        <dbReference type="ChEBI" id="CHEBI:74411"/>
        <dbReference type="ChEBI" id="CHEBI:74418"/>
        <dbReference type="ChEBI" id="CHEBI:456215"/>
        <dbReference type="EC" id="2.3.1.234"/>
    </reaction>
</comment>
<comment type="cofactor">
    <cofactor evidence="1">
        <name>Fe(2+)</name>
        <dbReference type="ChEBI" id="CHEBI:29033"/>
    </cofactor>
    <text evidence="1">Binds 1 Fe(2+) ion per subunit.</text>
</comment>
<comment type="subcellular location">
    <subcellularLocation>
        <location evidence="1">Cytoplasm</location>
    </subcellularLocation>
</comment>
<comment type="similarity">
    <text evidence="1">Belongs to the KAE1 / TsaD family.</text>
</comment>
<gene>
    <name evidence="1" type="primary">tsaD</name>
    <name type="synonym">gcp</name>
    <name type="ordered locus">FTL_1741</name>
</gene>
<organism>
    <name type="scientific">Francisella tularensis subsp. holarctica (strain LVS)</name>
    <dbReference type="NCBI Taxonomy" id="376619"/>
    <lineage>
        <taxon>Bacteria</taxon>
        <taxon>Pseudomonadati</taxon>
        <taxon>Pseudomonadota</taxon>
        <taxon>Gammaproteobacteria</taxon>
        <taxon>Thiotrichales</taxon>
        <taxon>Francisellaceae</taxon>
        <taxon>Francisella</taxon>
    </lineage>
</organism>